<feature type="chain" id="PRO_0000273698" description="Exodeoxyribonuclease 7 large subunit">
    <location>
        <begin position="1"/>
        <end position="404"/>
    </location>
</feature>
<organism>
    <name type="scientific">Tropheryma whipplei (strain TW08/27)</name>
    <name type="common">Whipple's bacillus</name>
    <dbReference type="NCBI Taxonomy" id="218496"/>
    <lineage>
        <taxon>Bacteria</taxon>
        <taxon>Bacillati</taxon>
        <taxon>Actinomycetota</taxon>
        <taxon>Actinomycetes</taxon>
        <taxon>Micrococcales</taxon>
        <taxon>Tropherymataceae</taxon>
        <taxon>Tropheryma</taxon>
    </lineage>
</organism>
<gene>
    <name evidence="1" type="primary">xseA</name>
    <name type="ordered locus">TW665</name>
</gene>
<protein>
    <recommendedName>
        <fullName evidence="1">Exodeoxyribonuclease 7 large subunit</fullName>
        <ecNumber evidence="1">3.1.11.6</ecNumber>
    </recommendedName>
    <alternativeName>
        <fullName evidence="1">Exodeoxyribonuclease VII large subunit</fullName>
        <shortName evidence="1">Exonuclease VII large subunit</shortName>
    </alternativeName>
</protein>
<keyword id="KW-0963">Cytoplasm</keyword>
<keyword id="KW-0269">Exonuclease</keyword>
<keyword id="KW-0378">Hydrolase</keyword>
<keyword id="KW-0540">Nuclease</keyword>
<sequence length="404" mass="44985">MDMQADEMYRQDPLGSCGNPRQVSHITGRLSSLLGELPATWIEGEVTQLSPRRIGVFLTLKDMNESKHLEFFLPFDAFKDEVEVGNRVKIHGKLEFWATSGQIKVKGFEIQSVGIGELIERIARLRVQLALEGLYEHKRPLPFIPKLIGLVTGQNSDAEKDVVTNVLLRWPAAKFCTIYASMQGASCVSETISAIQKLDANNDVDVIIVARGGGSFHDLIGFSDEQMIRAVFAIKTPLISAIGHEADRPILDEVADLRASTPTDAAKRVVPDIADEKRLIKSAMSFLKKSYEPVIDKIKCDTLSWSQAFSNPFETFIAPRRREIDLFYQQMLTVVWANFSKTETEIAAIKKHLLAISPQNTLVRGYAMIEDETGRIISSADKLSAGDTVTLRLHDGLVRAEITQ</sequence>
<dbReference type="EC" id="3.1.11.6" evidence="1"/>
<dbReference type="EMBL" id="BX251412">
    <property type="protein sequence ID" value="CAD67324.1"/>
    <property type="molecule type" value="Genomic_DNA"/>
</dbReference>
<dbReference type="SMR" id="Q83HE6"/>
<dbReference type="KEGG" id="tws:TW665"/>
<dbReference type="HOGENOM" id="CLU_023625_2_1_11"/>
<dbReference type="GO" id="GO:0005737">
    <property type="term" value="C:cytoplasm"/>
    <property type="evidence" value="ECO:0007669"/>
    <property type="project" value="UniProtKB-SubCell"/>
</dbReference>
<dbReference type="GO" id="GO:0009318">
    <property type="term" value="C:exodeoxyribonuclease VII complex"/>
    <property type="evidence" value="ECO:0007669"/>
    <property type="project" value="InterPro"/>
</dbReference>
<dbReference type="GO" id="GO:0008855">
    <property type="term" value="F:exodeoxyribonuclease VII activity"/>
    <property type="evidence" value="ECO:0007669"/>
    <property type="project" value="UniProtKB-UniRule"/>
</dbReference>
<dbReference type="GO" id="GO:0003676">
    <property type="term" value="F:nucleic acid binding"/>
    <property type="evidence" value="ECO:0007669"/>
    <property type="project" value="InterPro"/>
</dbReference>
<dbReference type="GO" id="GO:0006308">
    <property type="term" value="P:DNA catabolic process"/>
    <property type="evidence" value="ECO:0007669"/>
    <property type="project" value="UniProtKB-UniRule"/>
</dbReference>
<dbReference type="CDD" id="cd04489">
    <property type="entry name" value="ExoVII_LU_OBF"/>
    <property type="match status" value="1"/>
</dbReference>
<dbReference type="HAMAP" id="MF_00378">
    <property type="entry name" value="Exonuc_7_L"/>
    <property type="match status" value="1"/>
</dbReference>
<dbReference type="InterPro" id="IPR003753">
    <property type="entry name" value="Exonuc_VII_L"/>
</dbReference>
<dbReference type="InterPro" id="IPR020579">
    <property type="entry name" value="Exonuc_VII_lsu_C"/>
</dbReference>
<dbReference type="InterPro" id="IPR025824">
    <property type="entry name" value="OB-fold_nuc-bd_dom"/>
</dbReference>
<dbReference type="NCBIfam" id="TIGR00237">
    <property type="entry name" value="xseA"/>
    <property type="match status" value="1"/>
</dbReference>
<dbReference type="PANTHER" id="PTHR30008">
    <property type="entry name" value="EXODEOXYRIBONUCLEASE 7 LARGE SUBUNIT"/>
    <property type="match status" value="1"/>
</dbReference>
<dbReference type="PANTHER" id="PTHR30008:SF0">
    <property type="entry name" value="EXODEOXYRIBONUCLEASE 7 LARGE SUBUNIT"/>
    <property type="match status" value="1"/>
</dbReference>
<dbReference type="Pfam" id="PF02601">
    <property type="entry name" value="Exonuc_VII_L"/>
    <property type="match status" value="2"/>
</dbReference>
<dbReference type="Pfam" id="PF13742">
    <property type="entry name" value="tRNA_anti_2"/>
    <property type="match status" value="1"/>
</dbReference>
<evidence type="ECO:0000255" key="1">
    <source>
        <dbReference type="HAMAP-Rule" id="MF_00378"/>
    </source>
</evidence>
<accession>Q83HE6</accession>
<name>EX7L_TROW8</name>
<comment type="function">
    <text evidence="1">Bidirectionally degrades single-stranded DNA into large acid-insoluble oligonucleotides, which are then degraded further into small acid-soluble oligonucleotides.</text>
</comment>
<comment type="catalytic activity">
    <reaction evidence="1">
        <text>Exonucleolytic cleavage in either 5'- to 3'- or 3'- to 5'-direction to yield nucleoside 5'-phosphates.</text>
        <dbReference type="EC" id="3.1.11.6"/>
    </reaction>
</comment>
<comment type="subunit">
    <text evidence="1">Heterooligomer composed of large and small subunits.</text>
</comment>
<comment type="subcellular location">
    <subcellularLocation>
        <location evidence="1">Cytoplasm</location>
    </subcellularLocation>
</comment>
<comment type="similarity">
    <text evidence="1">Belongs to the XseA family.</text>
</comment>
<proteinExistence type="inferred from homology"/>
<reference key="1">
    <citation type="journal article" date="2003" name="Lancet">
        <title>Sequencing and analysis of the genome of the Whipple's disease bacterium Tropheryma whipplei.</title>
        <authorList>
            <person name="Bentley S.D."/>
            <person name="Maiwald M."/>
            <person name="Murphy L.D."/>
            <person name="Pallen M.J."/>
            <person name="Yeats C.A."/>
            <person name="Dover L.G."/>
            <person name="Norbertczak H.T."/>
            <person name="Besra G.S."/>
            <person name="Quail M.A."/>
            <person name="Harris D.E."/>
            <person name="von Herbay A."/>
            <person name="Goble A."/>
            <person name="Rutter S."/>
            <person name="Squares R."/>
            <person name="Squares S."/>
            <person name="Barrell B.G."/>
            <person name="Parkhill J."/>
            <person name="Relman D.A."/>
        </authorList>
    </citation>
    <scope>NUCLEOTIDE SEQUENCE [LARGE SCALE GENOMIC DNA]</scope>
    <source>
        <strain>TW08/27</strain>
    </source>
</reference>